<dbReference type="EMBL" id="X65877">
    <property type="protein sequence ID" value="CAA46708.1"/>
    <property type="molecule type" value="Genomic_DNA"/>
</dbReference>
<dbReference type="EMBL" id="AY190960">
    <property type="protein sequence ID" value="AAO01119.1"/>
    <property type="molecule type" value="Genomic_DNA"/>
</dbReference>
<dbReference type="EMBL" id="AY754574">
    <property type="protein sequence ID" value="AAX13149.1"/>
    <property type="molecule type" value="Genomic_DNA"/>
</dbReference>
<dbReference type="EMBL" id="CM000070">
    <property type="protein sequence ID" value="EAL28881.2"/>
    <property type="molecule type" value="Genomic_DNA"/>
</dbReference>
<dbReference type="EMBL" id="AF450965">
    <property type="protein sequence ID" value="AAM09428.1"/>
    <property type="molecule type" value="Genomic_DNA"/>
</dbReference>
<dbReference type="EMBL" id="AF450966">
    <property type="protein sequence ID" value="AAM09429.1"/>
    <property type="molecule type" value="Genomic_DNA"/>
</dbReference>
<dbReference type="EMBL" id="AF450967">
    <property type="protein sequence ID" value="AAM09430.1"/>
    <property type="molecule type" value="Genomic_DNA"/>
</dbReference>
<dbReference type="EMBL" id="AF450968">
    <property type="protein sequence ID" value="AAM09431.1"/>
    <property type="molecule type" value="Genomic_DNA"/>
</dbReference>
<dbReference type="EMBL" id="AF450969">
    <property type="protein sequence ID" value="AAM09432.1"/>
    <property type="molecule type" value="Genomic_DNA"/>
</dbReference>
<dbReference type="EMBL" id="AF450970">
    <property type="protein sequence ID" value="AAM09433.1"/>
    <property type="molecule type" value="Genomic_DNA"/>
</dbReference>
<dbReference type="EMBL" id="AF450971">
    <property type="protein sequence ID" value="AAM09434.1"/>
    <property type="molecule type" value="Genomic_DNA"/>
</dbReference>
<dbReference type="EMBL" id="AF450972">
    <property type="protein sequence ID" value="AAM09435.1"/>
    <property type="molecule type" value="Genomic_DNA"/>
</dbReference>
<dbReference type="EMBL" id="AF450973">
    <property type="protein sequence ID" value="AAM09436.1"/>
    <property type="molecule type" value="Genomic_DNA"/>
</dbReference>
<dbReference type="EMBL" id="AF450974">
    <property type="protein sequence ID" value="AAM09437.1"/>
    <property type="molecule type" value="Genomic_DNA"/>
</dbReference>
<dbReference type="EMBL" id="AF450975">
    <property type="protein sequence ID" value="AAM09438.1"/>
    <property type="molecule type" value="Genomic_DNA"/>
</dbReference>
<dbReference type="EMBL" id="AF450976">
    <property type="protein sequence ID" value="AAM09439.1"/>
    <property type="molecule type" value="Genomic_DNA"/>
</dbReference>
<dbReference type="EMBL" id="AF450977">
    <property type="protein sequence ID" value="AAM09440.1"/>
    <property type="molecule type" value="Genomic_DNA"/>
</dbReference>
<dbReference type="EMBL" id="AF450978">
    <property type="protein sequence ID" value="AAM09441.1"/>
    <property type="molecule type" value="Genomic_DNA"/>
</dbReference>
<dbReference type="EMBL" id="AF450979">
    <property type="protein sequence ID" value="AAM09442.1"/>
    <property type="molecule type" value="Genomic_DNA"/>
</dbReference>
<dbReference type="EMBL" id="AF450980">
    <property type="protein sequence ID" value="AAM09443.1"/>
    <property type="molecule type" value="Genomic_DNA"/>
</dbReference>
<dbReference type="EMBL" id="AF450981">
    <property type="protein sequence ID" value="AAM09444.1"/>
    <property type="molecule type" value="Genomic_DNA"/>
</dbReference>
<dbReference type="PIR" id="S40691">
    <property type="entry name" value="S40691"/>
</dbReference>
<dbReference type="RefSeq" id="XP_001359729.2">
    <property type="nucleotide sequence ID" value="XM_001359692.3"/>
</dbReference>
<dbReference type="SMR" id="P28678"/>
<dbReference type="DIP" id="DIP-769N"/>
<dbReference type="FunCoup" id="P28678">
    <property type="interactions" value="33"/>
</dbReference>
<dbReference type="STRING" id="46245.P28678"/>
<dbReference type="GlyCosmos" id="P28678">
    <property type="glycosylation" value="2 sites, No reported glycans"/>
</dbReference>
<dbReference type="EnsemblMetazoa" id="FBtr0286275">
    <property type="protein sequence ID" value="FBpp0284713"/>
    <property type="gene ID" value="FBgn0012733"/>
</dbReference>
<dbReference type="GeneID" id="4802902"/>
<dbReference type="KEGG" id="dpo:4802902"/>
<dbReference type="CTD" id="42367"/>
<dbReference type="eggNOG" id="KOG3656">
    <property type="taxonomic scope" value="Eukaryota"/>
</dbReference>
<dbReference type="HOGENOM" id="CLU_009579_3_0_1"/>
<dbReference type="InParanoid" id="P28678"/>
<dbReference type="OMA" id="WKMAKIV"/>
<dbReference type="ChiTaRS" id="ninaE">
    <property type="organism name" value="fly"/>
</dbReference>
<dbReference type="Proteomes" id="UP000001819">
    <property type="component" value="Chromosome 2"/>
</dbReference>
<dbReference type="Bgee" id="FBgn0012733">
    <property type="expression patterns" value="Expressed in insect adult head and 2 other cell types or tissues"/>
</dbReference>
<dbReference type="GO" id="GO:0033583">
    <property type="term" value="C:rhabdomere membrane"/>
    <property type="evidence" value="ECO:0007669"/>
    <property type="project" value="UniProtKB-SubCell"/>
</dbReference>
<dbReference type="GO" id="GO:0008020">
    <property type="term" value="F:G protein-coupled photoreceptor activity"/>
    <property type="evidence" value="ECO:0007669"/>
    <property type="project" value="UniProtKB-ARBA"/>
</dbReference>
<dbReference type="GO" id="GO:0007602">
    <property type="term" value="P:phototransduction"/>
    <property type="evidence" value="ECO:0007669"/>
    <property type="project" value="UniProtKB-KW"/>
</dbReference>
<dbReference type="GO" id="GO:0007601">
    <property type="term" value="P:visual perception"/>
    <property type="evidence" value="ECO:0007669"/>
    <property type="project" value="UniProtKB-KW"/>
</dbReference>
<dbReference type="CDD" id="cd15079">
    <property type="entry name" value="7tmA_photoreceptors_insect"/>
    <property type="match status" value="1"/>
</dbReference>
<dbReference type="FunFam" id="1.20.1070.10:FF:000044">
    <property type="entry name" value="Opsin, ultraviolet-sensitive"/>
    <property type="match status" value="1"/>
</dbReference>
<dbReference type="Gene3D" id="1.20.1070.10">
    <property type="entry name" value="Rhodopsin 7-helix transmembrane proteins"/>
    <property type="match status" value="1"/>
</dbReference>
<dbReference type="InterPro" id="IPR050125">
    <property type="entry name" value="GPCR_opsins"/>
</dbReference>
<dbReference type="InterPro" id="IPR000276">
    <property type="entry name" value="GPCR_Rhodpsn"/>
</dbReference>
<dbReference type="InterPro" id="IPR017452">
    <property type="entry name" value="GPCR_Rhodpsn_7TM"/>
</dbReference>
<dbReference type="InterPro" id="IPR001760">
    <property type="entry name" value="Opsin"/>
</dbReference>
<dbReference type="InterPro" id="IPR001735">
    <property type="entry name" value="Opsin_RH1/RH2"/>
</dbReference>
<dbReference type="InterPro" id="IPR027430">
    <property type="entry name" value="Retinal_BS"/>
</dbReference>
<dbReference type="PANTHER" id="PTHR24240">
    <property type="entry name" value="OPSIN"/>
    <property type="match status" value="1"/>
</dbReference>
<dbReference type="Pfam" id="PF00001">
    <property type="entry name" value="7tm_1"/>
    <property type="match status" value="1"/>
</dbReference>
<dbReference type="PRINTS" id="PR00237">
    <property type="entry name" value="GPCRRHODOPSN"/>
</dbReference>
<dbReference type="PRINTS" id="PR00238">
    <property type="entry name" value="OPSIN"/>
</dbReference>
<dbReference type="PRINTS" id="PR00576">
    <property type="entry name" value="OPSINRH1RH2"/>
</dbReference>
<dbReference type="SUPFAM" id="SSF81321">
    <property type="entry name" value="Family A G protein-coupled receptor-like"/>
    <property type="match status" value="1"/>
</dbReference>
<dbReference type="PROSITE" id="PS00237">
    <property type="entry name" value="G_PROTEIN_RECEP_F1_1"/>
    <property type="match status" value="1"/>
</dbReference>
<dbReference type="PROSITE" id="PS50262">
    <property type="entry name" value="G_PROTEIN_RECEP_F1_2"/>
    <property type="match status" value="1"/>
</dbReference>
<dbReference type="PROSITE" id="PS00238">
    <property type="entry name" value="OPSIN"/>
    <property type="match status" value="1"/>
</dbReference>
<proteinExistence type="evidence at protein level"/>
<name>OPS1_DROPS</name>
<protein>
    <recommendedName>
        <fullName>Opsin Rh1</fullName>
    </recommendedName>
    <alternativeName>
        <fullName>Outer R1-R6 photoreceptor cells opsin</fullName>
    </alternativeName>
</protein>
<evidence type="ECO:0000250" key="1">
    <source>
        <dbReference type="UniProtKB" id="P06002"/>
    </source>
</evidence>
<evidence type="ECO:0000255" key="2"/>
<evidence type="ECO:0000255" key="3">
    <source>
        <dbReference type="PROSITE-ProRule" id="PRU00521"/>
    </source>
</evidence>
<evidence type="ECO:0000256" key="4">
    <source>
        <dbReference type="SAM" id="MobiDB-lite"/>
    </source>
</evidence>
<evidence type="ECO:0000305" key="5"/>
<comment type="function">
    <text>Visual pigments are the light-absorbing molecules that mediate vision. They consist of an apoprotein, opsin, covalently linked to cis-retinal.</text>
</comment>
<comment type="biophysicochemical properties">
    <absorption>
        <max>480 nm</max>
    </absorption>
</comment>
<comment type="subcellular location">
    <subcellularLocation>
        <location evidence="1">Cell projection</location>
        <location evidence="1">Rhabdomere membrane</location>
        <topology evidence="5">Multi-pass membrane protein</topology>
    </subcellularLocation>
</comment>
<comment type="PTM">
    <text>Phosphorylated on some or all of the serine and threonine residues present in the C-terminal region.</text>
</comment>
<comment type="miscellaneous">
    <text>Each Drosophila eye is composed of 800 facets or ommatidia. Each ommatidium contains 8 photoreceptor cells (R1-R8), the R1 to R6 cells are outer cells, while R7 and R8 are inner cells.</text>
</comment>
<comment type="similarity">
    <text evidence="3">Belongs to the G-protein coupled receptor 1 family. Opsin subfamily.</text>
</comment>
<reference key="1">
    <citation type="journal article" date="1992" name="Genetics">
        <title>Variable rates of evolution among Drosophila opsin genes.</title>
        <authorList>
            <person name="Carulli J.P."/>
            <person name="Hartl D.L."/>
        </authorList>
    </citation>
    <scope>NUCLEOTIDE SEQUENCE [GENOMIC DNA]</scope>
    <source>
        <strain>Apple Hill</strain>
    </source>
</reference>
<reference key="2">
    <citation type="journal article" date="2002" name="Genome Biol.">
        <title>Assessing the impact of comparative genomic sequence data on the functional annotation of the Drosophila genome.</title>
        <authorList>
            <person name="Bergman C.M."/>
            <person name="Pfeiffer B.D."/>
            <person name="Rincon-Limas D.E."/>
            <person name="Hoskins R.A."/>
            <person name="Gnirke A."/>
            <person name="Mungall C.J."/>
            <person name="Wang A.M."/>
            <person name="Kronmiller B."/>
            <person name="Pacleb J.M."/>
            <person name="Park S."/>
            <person name="Stapleton M."/>
            <person name="Wan K.H."/>
            <person name="George R.A."/>
            <person name="de Jong P.J."/>
            <person name="Botas J."/>
            <person name="Rubin G.M."/>
            <person name="Celniker S.E."/>
        </authorList>
    </citation>
    <scope>NUCLEOTIDE SEQUENCE [GENOMIC DNA]</scope>
    <source>
        <strain>Tucson 14011-0121.4</strain>
    </source>
</reference>
<reference key="3">
    <citation type="journal article" date="2005" name="Genetics">
        <title>Patterns of selection on synonymous and nonsynonymous variants in Drosophila miranda.</title>
        <authorList>
            <person name="Bartolome C."/>
            <person name="Maside X."/>
            <person name="Yi S."/>
            <person name="Grant A.L."/>
            <person name="Charlesworth B."/>
        </authorList>
    </citation>
    <scope>NUCLEOTIDE SEQUENCE [GENOMIC DNA]</scope>
</reference>
<reference key="4">
    <citation type="journal article" date="2005" name="Genome Res.">
        <title>Comparative genome sequencing of Drosophila pseudoobscura: chromosomal, gene, and cis-element evolution.</title>
        <authorList>
            <person name="Richards S."/>
            <person name="Liu Y."/>
            <person name="Bettencourt B.R."/>
            <person name="Hradecky P."/>
            <person name="Letovsky S."/>
            <person name="Nielsen R."/>
            <person name="Thornton K."/>
            <person name="Hubisz M.J."/>
            <person name="Chen R."/>
            <person name="Meisel R.P."/>
            <person name="Couronne O."/>
            <person name="Hua S."/>
            <person name="Smith M.A."/>
            <person name="Zhang P."/>
            <person name="Liu J."/>
            <person name="Bussemaker H.J."/>
            <person name="van Batenburg M.F."/>
            <person name="Howells S.L."/>
            <person name="Scherer S.E."/>
            <person name="Sodergren E."/>
            <person name="Matthews B.B."/>
            <person name="Crosby M.A."/>
            <person name="Schroeder A.J."/>
            <person name="Ortiz-Barrientos D."/>
            <person name="Rives C.M."/>
            <person name="Metzker M.L."/>
            <person name="Muzny D.M."/>
            <person name="Scott G."/>
            <person name="Steffen D."/>
            <person name="Wheeler D.A."/>
            <person name="Worley K.C."/>
            <person name="Havlak P."/>
            <person name="Durbin K.J."/>
            <person name="Egan A."/>
            <person name="Gill R."/>
            <person name="Hume J."/>
            <person name="Morgan M.B."/>
            <person name="Miner G."/>
            <person name="Hamilton C."/>
            <person name="Huang Y."/>
            <person name="Waldron L."/>
            <person name="Verduzco D."/>
            <person name="Clerc-Blankenburg K.P."/>
            <person name="Dubchak I."/>
            <person name="Noor M.A.F."/>
            <person name="Anderson W."/>
            <person name="White K.P."/>
            <person name="Clark A.G."/>
            <person name="Schaeffer S.W."/>
            <person name="Gelbart W.M."/>
            <person name="Weinstock G.M."/>
            <person name="Gibbs R.A."/>
        </authorList>
    </citation>
    <scope>NUCLEOTIDE SEQUENCE [LARGE SCALE GENOMIC DNA]</scope>
    <source>
        <strain>MV2-25 / Tucson 14011-0121.94</strain>
    </source>
</reference>
<reference key="5">
    <citation type="journal article" date="2002" name="Mol. Biol. Evol.">
        <title>Inferring the history of speciation from multilocus DNA sequence data: the case of Drosophila pseudoobscura and close relatives.</title>
        <authorList>
            <person name="Machado C.A."/>
            <person name="Kliman R.M."/>
            <person name="Markert J.A."/>
            <person name="Hey J."/>
        </authorList>
    </citation>
    <scope>NUCLEOTIDE SEQUENCE [GENOMIC DNA] OF 30-341</scope>
    <source>
        <strain>Abajo36</strain>
        <strain>AF2</strain>
        <strain>AFC12</strain>
        <strain>AFC3</strain>
        <strain>AFC7</strain>
        <strain>Flagstaff14</strain>
        <strain>Flagstaff16</strain>
        <strain>Flagstaff18</strain>
        <strain>Flagstaff5</strain>
        <strain>Mather10</strain>
        <strain>Mather17</strain>
        <strain>Mather32</strain>
        <strain>Mather48</strain>
        <strain>Mather52</strain>
        <strain>MSH10</strain>
        <strain>MSH21</strain>
        <strain>MSH32</strain>
    </source>
</reference>
<feature type="chain" id="PRO_0000197623" description="Opsin Rh1">
    <location>
        <begin position="1"/>
        <end position="373"/>
    </location>
</feature>
<feature type="topological domain" description="Extracellular" evidence="2">
    <location>
        <begin position="1"/>
        <end position="54"/>
    </location>
</feature>
<feature type="transmembrane region" description="Helical; Name=1" evidence="2">
    <location>
        <begin position="55"/>
        <end position="75"/>
    </location>
</feature>
<feature type="topological domain" description="Cytoplasmic" evidence="2">
    <location>
        <begin position="76"/>
        <end position="86"/>
    </location>
</feature>
<feature type="transmembrane region" description="Helical; Name=2" evidence="2">
    <location>
        <begin position="87"/>
        <end position="107"/>
    </location>
</feature>
<feature type="topological domain" description="Extracellular" evidence="2">
    <location>
        <begin position="108"/>
        <end position="124"/>
    </location>
</feature>
<feature type="transmembrane region" description="Helical; Name=3" evidence="2">
    <location>
        <begin position="125"/>
        <end position="145"/>
    </location>
</feature>
<feature type="topological domain" description="Cytoplasmic" evidence="2">
    <location>
        <begin position="146"/>
        <end position="162"/>
    </location>
</feature>
<feature type="transmembrane region" description="Helical; Name=4" evidence="2">
    <location>
        <begin position="163"/>
        <end position="183"/>
    </location>
</feature>
<feature type="topological domain" description="Extracellular" evidence="2">
    <location>
        <begin position="184"/>
        <end position="219"/>
    </location>
</feature>
<feature type="transmembrane region" description="Helical; Name=5" evidence="2">
    <location>
        <begin position="220"/>
        <end position="240"/>
    </location>
</feature>
<feature type="topological domain" description="Cytoplasmic" evidence="2">
    <location>
        <begin position="241"/>
        <end position="276"/>
    </location>
</feature>
<feature type="transmembrane region" description="Helical; Name=6" evidence="2">
    <location>
        <begin position="277"/>
        <end position="297"/>
    </location>
</feature>
<feature type="topological domain" description="Extracellular" evidence="2">
    <location>
        <begin position="298"/>
        <end position="308"/>
    </location>
</feature>
<feature type="transmembrane region" description="Helical; Name=7" evidence="2">
    <location>
        <begin position="309"/>
        <end position="331"/>
    </location>
</feature>
<feature type="topological domain" description="Cytoplasmic" evidence="2">
    <location>
        <begin position="332"/>
        <end position="373"/>
    </location>
</feature>
<feature type="region of interest" description="Disordered" evidence="4">
    <location>
        <begin position="354"/>
        <end position="373"/>
    </location>
</feature>
<feature type="compositionally biased region" description="Polar residues" evidence="4">
    <location>
        <begin position="358"/>
        <end position="373"/>
    </location>
</feature>
<feature type="modified residue" description="N6-(retinylidene)lysine">
    <location>
        <position position="319"/>
    </location>
</feature>
<feature type="glycosylation site" description="N-linked (GlcNAc...) asparagine" evidence="2">
    <location>
        <position position="20"/>
    </location>
</feature>
<feature type="glycosylation site" description="N-linked (GlcNAc...) asparagine" evidence="2">
    <location>
        <position position="196"/>
    </location>
</feature>
<feature type="disulfide bond" evidence="3">
    <location>
        <begin position="123"/>
        <end position="200"/>
    </location>
</feature>
<feature type="sequence conflict" description="In Ref. 3; AAX13149." evidence="5" ref="3">
    <original>MD</original>
    <variation>CC</variation>
    <location>
        <begin position="1"/>
        <end position="2"/>
    </location>
</feature>
<feature type="sequence conflict" description="In Ref. 1; CAA46708." evidence="5" ref="1">
    <original>H</original>
    <variation>Q</variation>
    <location>
        <position position="14"/>
    </location>
</feature>
<feature type="sequence conflict" description="In Ref. 1; CAA46708." evidence="5" ref="1">
    <original>L</original>
    <variation>P</variation>
    <location>
        <position position="18"/>
    </location>
</feature>
<feature type="sequence conflict" description="In Ref. 1; CAA46708." evidence="5" ref="1">
    <original>N</original>
    <variation>D</variation>
    <location>
        <position position="40"/>
    </location>
</feature>
<feature type="sequence conflict" description="In Ref. 1; CAA46708." evidence="5" ref="1">
    <original>S</original>
    <variation>T</variation>
    <location>
        <position position="178"/>
    </location>
</feature>
<feature type="sequence conflict" description="In Ref. 1; CAA46708." evidence="5" ref="1">
    <original>C</original>
    <variation>CC</variation>
    <location>
        <position position="181"/>
    </location>
</feature>
<feature type="sequence conflict" description="In Ref. 1; CAA46708." evidence="5" ref="1">
    <original>N</original>
    <variation>T</variation>
    <location>
        <position position="366"/>
    </location>
</feature>
<organism>
    <name type="scientific">Drosophila pseudoobscura pseudoobscura</name>
    <name type="common">Fruit fly</name>
    <dbReference type="NCBI Taxonomy" id="46245"/>
    <lineage>
        <taxon>Eukaryota</taxon>
        <taxon>Metazoa</taxon>
        <taxon>Ecdysozoa</taxon>
        <taxon>Arthropoda</taxon>
        <taxon>Hexapoda</taxon>
        <taxon>Insecta</taxon>
        <taxon>Pterygota</taxon>
        <taxon>Neoptera</taxon>
        <taxon>Endopterygota</taxon>
        <taxon>Diptera</taxon>
        <taxon>Brachycera</taxon>
        <taxon>Muscomorpha</taxon>
        <taxon>Ephydroidea</taxon>
        <taxon>Drosophilidae</taxon>
        <taxon>Drosophila</taxon>
        <taxon>Sophophora</taxon>
    </lineage>
</organism>
<sequence length="373" mass="41524">MDSFAAVATQLGPHFAALSNGSVVDKVTPDMAHLISPYWNQFPAMDPIWAKILTAYMIIIGMISWCGNGVVIYIFATTKSLRTPANLLVINLAISDFGIMITNTPMMGINLYFETWVLGPMMCDIYAGLGSAFGCSSIWSMCMISLDRYQVIVKGMAGRPMTIPLALGKIAYIWFMSSIWCLAPVFGWSRYVPEGNLTSCGIDYLERDWNPRSYLIFYSIFVYYIPLFLICYSYWFIIAAVSAHEKAMREQAKKMNVKSLRSSEDADKSAEGKLAKVALVTISLWFMAWTPYLVINCMGLFKFEGLTPLNTIWGACFAKSAACYNPIVYGISHPKYRLALKEKCPCCVFGKVDDGKSSEAQSQATNSEAESKA</sequence>
<gene>
    <name type="primary">ninaE</name>
    <name type="synonym">Rh1</name>
    <name type="ORF">GA18249</name>
</gene>
<keyword id="KW-1003">Cell membrane</keyword>
<keyword id="KW-0966">Cell projection</keyword>
<keyword id="KW-0157">Chromophore</keyword>
<keyword id="KW-1015">Disulfide bond</keyword>
<keyword id="KW-0297">G-protein coupled receptor</keyword>
<keyword id="KW-0325">Glycoprotein</keyword>
<keyword id="KW-0472">Membrane</keyword>
<keyword id="KW-0597">Phosphoprotein</keyword>
<keyword id="KW-0600">Photoreceptor protein</keyword>
<keyword id="KW-0675">Receptor</keyword>
<keyword id="KW-1185">Reference proteome</keyword>
<keyword id="KW-0681">Retinal protein</keyword>
<keyword id="KW-0716">Sensory transduction</keyword>
<keyword id="KW-0807">Transducer</keyword>
<keyword id="KW-0812">Transmembrane</keyword>
<keyword id="KW-1133">Transmembrane helix</keyword>
<keyword id="KW-0844">Vision</keyword>
<accession>P28678</accession>
<accession>Q294T3</accession>
<accession>Q56RD3</accession>
<accession>Q8I154</accession>
<accession>Q8STC6</accession>